<protein>
    <recommendedName>
        <fullName evidence="5">Beta-amanitin proprotein</fullName>
    </recommendedName>
    <component>
        <recommendedName>
            <fullName evidence="5">Beta-amanitin</fullName>
        </recommendedName>
    </component>
</protein>
<dbReference type="EMBL" id="KF552089">
    <property type="protein sequence ID" value="AHB18717.1"/>
    <property type="molecule type" value="Genomic_DNA"/>
</dbReference>
<dbReference type="GO" id="GO:0090729">
    <property type="term" value="F:toxin activity"/>
    <property type="evidence" value="ECO:0007669"/>
    <property type="project" value="UniProtKB-KW"/>
</dbReference>
<dbReference type="InterPro" id="IPR027582">
    <property type="entry name" value="Amanitin/phalloidin"/>
</dbReference>
<dbReference type="NCBIfam" id="TIGR04309">
    <property type="entry name" value="amanitin"/>
    <property type="match status" value="1"/>
</dbReference>
<dbReference type="Pfam" id="PF24112">
    <property type="entry name" value="Amanitin"/>
    <property type="match status" value="1"/>
</dbReference>
<evidence type="ECO:0000250" key="1">
    <source>
        <dbReference type="UniProtKB" id="A0A067SLB9"/>
    </source>
</evidence>
<evidence type="ECO:0000250" key="2">
    <source>
        <dbReference type="UniProtKB" id="A8W7M4"/>
    </source>
</evidence>
<evidence type="ECO:0000250" key="3">
    <source>
        <dbReference type="UniProtKB" id="P85421"/>
    </source>
</evidence>
<evidence type="ECO:0000303" key="4">
    <source>
    </source>
</evidence>
<evidence type="ECO:0000303" key="5">
    <source>
    </source>
</evidence>
<evidence type="ECO:0000305" key="6"/>
<evidence type="ECO:0000305" key="7">
    <source>
    </source>
</evidence>
<accession>A0A023IWG3</accession>
<proteinExistence type="inferred from homology"/>
<sequence length="33" mass="3475">MSDINATRLPIWGIGCDPCVGDEVTALLTRGEA</sequence>
<feature type="propeptide" id="PRO_0000443596" evidence="2">
    <location>
        <begin position="1"/>
        <end position="10"/>
    </location>
</feature>
<feature type="peptide" id="PRO_0000443597" description="Beta-amanitin" evidence="2">
    <location>
        <begin position="11"/>
        <end position="18"/>
    </location>
</feature>
<feature type="propeptide" id="PRO_0000443598" evidence="2">
    <location>
        <begin position="19"/>
        <end position="33"/>
    </location>
</feature>
<feature type="cross-link" description="Cyclopeptide (Ile-Pro)" evidence="2">
    <location>
        <begin position="11"/>
        <end position="18"/>
    </location>
</feature>
<feature type="cross-link" description="2'-cysteinyl-6'-hydroxytryptophan sulfoxide (Trp-Cys)" evidence="3">
    <location>
        <begin position="12"/>
        <end position="16"/>
    </location>
</feature>
<reference key="1">
    <citation type="journal article" date="2014" name="Toxicon">
        <title>The molecular diversity of toxin gene families in lethal Amanita mushrooms.</title>
        <authorList>
            <person name="Li P."/>
            <person name="Deng W."/>
            <person name="Li T."/>
        </authorList>
    </citation>
    <scope>NUCLEOTIDE SEQUENCE [GENOMIC DNA]</scope>
    <scope>FUNCTION</scope>
</reference>
<reference key="2">
    <citation type="journal article" date="2002" name="J. Toxicol. Clin. Toxicol.">
        <title>Treatment of amatoxin poisoning: 20-year retrospective analysis.</title>
        <authorList>
            <person name="Enjalbert F."/>
            <person name="Rapior S."/>
            <person name="Nouguier-Soule J."/>
            <person name="Guillon S."/>
            <person name="Amouroux N."/>
            <person name="Cabot C."/>
        </authorList>
    </citation>
    <scope>REVIEW ON TOXICITY</scope>
</reference>
<comment type="function">
    <text evidence="7">Toxin belonging to the bicyclic octapeptides amatoxins that acts by binding non-competitively to RNA polymerase II and greatly slowing the elongation of transcripts from target promoters (PubMed:24613547).</text>
</comment>
<comment type="PTM">
    <text evidence="1 7">Processed by the macrocyclase-peptidase enzyme POPB to yield a toxic cyclic decapeptide (PubMed:24613547). POPB first removes 10 residues from the N-terminus (By similarity). Conformational trapping of the remaining peptide forces the enzyme to release this intermediate rather than proceed to macrocyclization (By similarity). The enzyme rebinds the remaining peptide in a different conformation and catalyzes macrocyclization of the N-terminal 8 residues (By similarity).</text>
</comment>
<comment type="miscellaneous">
    <text evidence="4">The typical symptoms of amatoxin poisoning are gastro-intestinal distress beginning 6-12 hours after ingestion, a remission phase lasting 12-24 hours, and progressive loss of liver function culminating in death within 3-5 days (PubMed:12475187). One of the few effective treatments is liver transplantation (PubMed:12475187).</text>
</comment>
<comment type="similarity">
    <text evidence="6">Belongs to the MSDIN fungal toxin family.</text>
</comment>
<organism>
    <name type="scientific">Amanita fuligineoides</name>
    <dbReference type="NCBI Taxonomy" id="580329"/>
    <lineage>
        <taxon>Eukaryota</taxon>
        <taxon>Fungi</taxon>
        <taxon>Dikarya</taxon>
        <taxon>Basidiomycota</taxon>
        <taxon>Agaricomycotina</taxon>
        <taxon>Agaricomycetes</taxon>
        <taxon>Agaricomycetidae</taxon>
        <taxon>Agaricales</taxon>
        <taxon>Pluteineae</taxon>
        <taxon>Amanitaceae</taxon>
        <taxon>Amanita</taxon>
    </lineage>
</organism>
<keyword id="KW-0883">Thioether bond</keyword>
<keyword id="KW-0800">Toxin</keyword>
<name>BAMAT_AMAFL</name>